<reference key="1">
    <citation type="journal article" date="2005" name="Nature">
        <title>The genome of the social amoeba Dictyostelium discoideum.</title>
        <authorList>
            <person name="Eichinger L."/>
            <person name="Pachebat J.A."/>
            <person name="Gloeckner G."/>
            <person name="Rajandream M.A."/>
            <person name="Sucgang R."/>
            <person name="Berriman M."/>
            <person name="Song J."/>
            <person name="Olsen R."/>
            <person name="Szafranski K."/>
            <person name="Xu Q."/>
            <person name="Tunggal B."/>
            <person name="Kummerfeld S."/>
            <person name="Madera M."/>
            <person name="Konfortov B.A."/>
            <person name="Rivero F."/>
            <person name="Bankier A.T."/>
            <person name="Lehmann R."/>
            <person name="Hamlin N."/>
            <person name="Davies R."/>
            <person name="Gaudet P."/>
            <person name="Fey P."/>
            <person name="Pilcher K."/>
            <person name="Chen G."/>
            <person name="Saunders D."/>
            <person name="Sodergren E.J."/>
            <person name="Davis P."/>
            <person name="Kerhornou A."/>
            <person name="Nie X."/>
            <person name="Hall N."/>
            <person name="Anjard C."/>
            <person name="Hemphill L."/>
            <person name="Bason N."/>
            <person name="Farbrother P."/>
            <person name="Desany B."/>
            <person name="Just E."/>
            <person name="Morio T."/>
            <person name="Rost R."/>
            <person name="Churcher C.M."/>
            <person name="Cooper J."/>
            <person name="Haydock S."/>
            <person name="van Driessche N."/>
            <person name="Cronin A."/>
            <person name="Goodhead I."/>
            <person name="Muzny D.M."/>
            <person name="Mourier T."/>
            <person name="Pain A."/>
            <person name="Lu M."/>
            <person name="Harper D."/>
            <person name="Lindsay R."/>
            <person name="Hauser H."/>
            <person name="James K.D."/>
            <person name="Quiles M."/>
            <person name="Madan Babu M."/>
            <person name="Saito T."/>
            <person name="Buchrieser C."/>
            <person name="Wardroper A."/>
            <person name="Felder M."/>
            <person name="Thangavelu M."/>
            <person name="Johnson D."/>
            <person name="Knights A."/>
            <person name="Loulseged H."/>
            <person name="Mungall K.L."/>
            <person name="Oliver K."/>
            <person name="Price C."/>
            <person name="Quail M.A."/>
            <person name="Urushihara H."/>
            <person name="Hernandez J."/>
            <person name="Rabbinowitsch E."/>
            <person name="Steffen D."/>
            <person name="Sanders M."/>
            <person name="Ma J."/>
            <person name="Kohara Y."/>
            <person name="Sharp S."/>
            <person name="Simmonds M.N."/>
            <person name="Spiegler S."/>
            <person name="Tivey A."/>
            <person name="Sugano S."/>
            <person name="White B."/>
            <person name="Walker D."/>
            <person name="Woodward J.R."/>
            <person name="Winckler T."/>
            <person name="Tanaka Y."/>
            <person name="Shaulsky G."/>
            <person name="Schleicher M."/>
            <person name="Weinstock G.M."/>
            <person name="Rosenthal A."/>
            <person name="Cox E.C."/>
            <person name="Chisholm R.L."/>
            <person name="Gibbs R.A."/>
            <person name="Loomis W.F."/>
            <person name="Platzer M."/>
            <person name="Kay R.R."/>
            <person name="Williams J.G."/>
            <person name="Dear P.H."/>
            <person name="Noegel A.A."/>
            <person name="Barrell B.G."/>
            <person name="Kuspa A."/>
        </authorList>
    </citation>
    <scope>NUCLEOTIDE SEQUENCE [LARGE SCALE GENOMIC DNA]</scope>
    <source>
        <strain>AX4</strain>
    </source>
</reference>
<accession>Q54GN8</accession>
<proteinExistence type="inferred from homology"/>
<name>NSA2_DICDI</name>
<protein>
    <recommendedName>
        <fullName>Ribosome biogenesis protein NSA2 homolog</fullName>
    </recommendedName>
</protein>
<organism>
    <name type="scientific">Dictyostelium discoideum</name>
    <name type="common">Social amoeba</name>
    <dbReference type="NCBI Taxonomy" id="44689"/>
    <lineage>
        <taxon>Eukaryota</taxon>
        <taxon>Amoebozoa</taxon>
        <taxon>Evosea</taxon>
        <taxon>Eumycetozoa</taxon>
        <taxon>Dictyostelia</taxon>
        <taxon>Dictyosteliales</taxon>
        <taxon>Dictyosteliaceae</taxon>
        <taxon>Dictyostelium</taxon>
    </lineage>
</organism>
<evidence type="ECO:0000250" key="1"/>
<evidence type="ECO:0000255" key="2">
    <source>
        <dbReference type="PROSITE-ProRule" id="PRU00768"/>
    </source>
</evidence>
<evidence type="ECO:0000305" key="3"/>
<sequence>MPQGDHIELHQKRFGRRLDHYEKVRKKTARAAHKRSAIAQKVTGLKAKLYNKKRYSEKAEMKKTIAMHQERTNKKASDDKVKEGAVPAYLLDREGVSRAKVLSNMVKQKRKEKAGKWDVPLPKVRAISEDEMFKVVKSGKRQKKAWKRFVTKVTFVGEGFTRKPPKYERFIRPTGLRFKKAHVTHPELKSTFYLDILSVKKNPQSPTYTQLGVITKGTILEVNVSDLGLVTQTGKVVWGKMAQVTNNPENDGCINAVLLV</sequence>
<dbReference type="EMBL" id="AAFI02000151">
    <property type="protein sequence ID" value="EAL62421.1"/>
    <property type="molecule type" value="Genomic_DNA"/>
</dbReference>
<dbReference type="RefSeq" id="XP_635924.1">
    <property type="nucleotide sequence ID" value="XM_630832.1"/>
</dbReference>
<dbReference type="SMR" id="Q54GN8"/>
<dbReference type="FunCoup" id="Q54GN8">
    <property type="interactions" value="684"/>
</dbReference>
<dbReference type="STRING" id="44689.Q54GN8"/>
<dbReference type="PaxDb" id="44689-DDB0188692"/>
<dbReference type="EnsemblProtists" id="EAL62421">
    <property type="protein sequence ID" value="EAL62421"/>
    <property type="gene ID" value="DDB_G0290031"/>
</dbReference>
<dbReference type="GeneID" id="8627445"/>
<dbReference type="KEGG" id="ddi:DDB_G0290031"/>
<dbReference type="dictyBase" id="DDB_G0290031"/>
<dbReference type="VEuPathDB" id="AmoebaDB:DDB_G0290031"/>
<dbReference type="eggNOG" id="KOG3163">
    <property type="taxonomic scope" value="Eukaryota"/>
</dbReference>
<dbReference type="HOGENOM" id="CLU_1070048_0_0_1"/>
<dbReference type="InParanoid" id="Q54GN8"/>
<dbReference type="OMA" id="TNTPEND"/>
<dbReference type="PhylomeDB" id="Q54GN8"/>
<dbReference type="PRO" id="PR:Q54GN8"/>
<dbReference type="Proteomes" id="UP000002195">
    <property type="component" value="Chromosome 5"/>
</dbReference>
<dbReference type="GO" id="GO:0005730">
    <property type="term" value="C:nucleolus"/>
    <property type="evidence" value="ECO:0007669"/>
    <property type="project" value="UniProtKB-SubCell"/>
</dbReference>
<dbReference type="GO" id="GO:0030687">
    <property type="term" value="C:preribosome, large subunit precursor"/>
    <property type="evidence" value="ECO:0000318"/>
    <property type="project" value="GO_Central"/>
</dbReference>
<dbReference type="GO" id="GO:0000460">
    <property type="term" value="P:maturation of 5.8S rRNA"/>
    <property type="evidence" value="ECO:0000318"/>
    <property type="project" value="GO_Central"/>
</dbReference>
<dbReference type="GO" id="GO:0000470">
    <property type="term" value="P:maturation of LSU-rRNA"/>
    <property type="evidence" value="ECO:0000318"/>
    <property type="project" value="GO_Central"/>
</dbReference>
<dbReference type="CDD" id="cd11381">
    <property type="entry name" value="NSA2"/>
    <property type="match status" value="1"/>
</dbReference>
<dbReference type="FunFam" id="2.40.10.310:FF:000001">
    <property type="entry name" value="NSA2, ribosome biogenesis homolog"/>
    <property type="match status" value="1"/>
</dbReference>
<dbReference type="Gene3D" id="2.40.10.310">
    <property type="match status" value="1"/>
</dbReference>
<dbReference type="InterPro" id="IPR039411">
    <property type="entry name" value="NSA2_fam"/>
</dbReference>
<dbReference type="InterPro" id="IPR022309">
    <property type="entry name" value="Ribosomal_Se8/biogenesis_NSA2"/>
</dbReference>
<dbReference type="PANTHER" id="PTHR12642">
    <property type="entry name" value="RIBOSOME BIOGENESIS PROTEIN NSA2 HOMOLOG"/>
    <property type="match status" value="1"/>
</dbReference>
<dbReference type="Pfam" id="PF01201">
    <property type="entry name" value="Ribosomal_S8e"/>
    <property type="match status" value="1"/>
</dbReference>
<gene>
    <name type="primary">nsa2</name>
    <name type="ORF">DDB_G0290031</name>
</gene>
<keyword id="KW-0539">Nucleus</keyword>
<keyword id="KW-1185">Reference proteome</keyword>
<keyword id="KW-0687">Ribonucleoprotein</keyword>
<keyword id="KW-0690">Ribosome biogenesis</keyword>
<keyword id="KW-0698">rRNA processing</keyword>
<feature type="chain" id="PRO_0000320429" description="Ribosome biogenesis protein NSA2 homolog">
    <location>
        <begin position="1"/>
        <end position="260"/>
    </location>
</feature>
<feature type="short sequence motif" description="Nuclear localization signal" evidence="2">
    <location>
        <begin position="11"/>
        <end position="18"/>
    </location>
</feature>
<comment type="function">
    <text evidence="1">Involved in the biogenesis of the 60S ribosomal subunit. May play a part in the quality control of pre-60S particles (By similarity).</text>
</comment>
<comment type="subunit">
    <text evidence="1">Component of the pre-66S ribosomal particle.</text>
</comment>
<comment type="subcellular location">
    <subcellularLocation>
        <location evidence="1">Nucleus</location>
        <location evidence="1">Nucleolus</location>
    </subcellularLocation>
</comment>
<comment type="similarity">
    <text evidence="3">Belongs to the eukaryotic ribosomal protein eS8 family. Ribosome biogenesis protein NSA2 subfamily.</text>
</comment>